<accession>A1ACV5</accession>
<name>YEGS_ECOK1</name>
<feature type="chain" id="PRO_0000292144" description="Probable lipid kinase YegS">
    <location>
        <begin position="1"/>
        <end position="299"/>
    </location>
</feature>
<feature type="domain" description="DAGKc" evidence="1">
    <location>
        <begin position="2"/>
        <end position="133"/>
    </location>
</feature>
<feature type="active site" description="Proton acceptor" evidence="1">
    <location>
        <position position="271"/>
    </location>
</feature>
<feature type="binding site" evidence="1">
    <location>
        <position position="40"/>
    </location>
    <ligand>
        <name>ATP</name>
        <dbReference type="ChEBI" id="CHEBI:30616"/>
    </ligand>
</feature>
<feature type="binding site" evidence="1">
    <location>
        <begin position="66"/>
        <end position="72"/>
    </location>
    <ligand>
        <name>ATP</name>
        <dbReference type="ChEBI" id="CHEBI:30616"/>
    </ligand>
</feature>
<feature type="binding site" evidence="1">
    <location>
        <position position="95"/>
    </location>
    <ligand>
        <name>ATP</name>
        <dbReference type="ChEBI" id="CHEBI:30616"/>
    </ligand>
</feature>
<feature type="binding site" evidence="1">
    <location>
        <position position="215"/>
    </location>
    <ligand>
        <name>Mg(2+)</name>
        <dbReference type="ChEBI" id="CHEBI:18420"/>
    </ligand>
</feature>
<feature type="binding site" evidence="1">
    <location>
        <position position="218"/>
    </location>
    <ligand>
        <name>Mg(2+)</name>
        <dbReference type="ChEBI" id="CHEBI:18420"/>
    </ligand>
</feature>
<feature type="binding site" evidence="1">
    <location>
        <position position="220"/>
    </location>
    <ligand>
        <name>Mg(2+)</name>
        <dbReference type="ChEBI" id="CHEBI:18420"/>
    </ligand>
</feature>
<comment type="function">
    <text evidence="1">Probably phosphorylates lipids; the in vivo substrate is unknown.</text>
</comment>
<comment type="cofactor">
    <cofactor evidence="1">
        <name>Mg(2+)</name>
        <dbReference type="ChEBI" id="CHEBI:18420"/>
    </cofactor>
    <cofactor evidence="1">
        <name>Ca(2+)</name>
        <dbReference type="ChEBI" id="CHEBI:29108"/>
    </cofactor>
    <text evidence="1">Binds 1 Mg(2+) ion per subunit. Ca(2+) may be able to substitute.</text>
</comment>
<comment type="subcellular location">
    <subcellularLocation>
        <location evidence="1">Cytoplasm</location>
    </subcellularLocation>
</comment>
<comment type="similarity">
    <text evidence="1">Belongs to the diacylglycerol/lipid kinase family. YegS lipid kinase subfamily.</text>
</comment>
<gene>
    <name evidence="1" type="primary">yegS</name>
    <name type="ordered locus">Ecok1_20010</name>
    <name type="ORF">APECO1_4456</name>
</gene>
<proteinExistence type="inferred from homology"/>
<evidence type="ECO:0000255" key="1">
    <source>
        <dbReference type="HAMAP-Rule" id="MF_01377"/>
    </source>
</evidence>
<protein>
    <recommendedName>
        <fullName evidence="1">Probable lipid kinase YegS</fullName>
        <ecNumber evidence="1">2.7.1.-</ecNumber>
    </recommendedName>
</protein>
<reference key="1">
    <citation type="journal article" date="2007" name="J. Bacteriol.">
        <title>The genome sequence of avian pathogenic Escherichia coli strain O1:K1:H7 shares strong similarities with human extraintestinal pathogenic E. coli genomes.</title>
        <authorList>
            <person name="Johnson T.J."/>
            <person name="Kariyawasam S."/>
            <person name="Wannemuehler Y."/>
            <person name="Mangiamele P."/>
            <person name="Johnson S.J."/>
            <person name="Doetkott C."/>
            <person name="Skyberg J.A."/>
            <person name="Lynne A.M."/>
            <person name="Johnson J.R."/>
            <person name="Nolan L.K."/>
        </authorList>
    </citation>
    <scope>NUCLEOTIDE SEQUENCE [LARGE SCALE GENOMIC DNA]</scope>
</reference>
<organism>
    <name type="scientific">Escherichia coli O1:K1 / APEC</name>
    <dbReference type="NCBI Taxonomy" id="405955"/>
    <lineage>
        <taxon>Bacteria</taxon>
        <taxon>Pseudomonadati</taxon>
        <taxon>Pseudomonadota</taxon>
        <taxon>Gammaproteobacteria</taxon>
        <taxon>Enterobacterales</taxon>
        <taxon>Enterobacteriaceae</taxon>
        <taxon>Escherichia</taxon>
    </lineage>
</organism>
<dbReference type="EC" id="2.7.1.-" evidence="1"/>
<dbReference type="EMBL" id="CP000468">
    <property type="protein sequence ID" value="ABJ01495.1"/>
    <property type="molecule type" value="Genomic_DNA"/>
</dbReference>
<dbReference type="RefSeq" id="WP_000807360.1">
    <property type="nucleotide sequence ID" value="NZ_CADILS010000067.1"/>
</dbReference>
<dbReference type="SMR" id="A1ACV5"/>
<dbReference type="KEGG" id="ecv:APECO1_4456"/>
<dbReference type="HOGENOM" id="CLU_045532_1_1_6"/>
<dbReference type="Proteomes" id="UP000008216">
    <property type="component" value="Chromosome"/>
</dbReference>
<dbReference type="GO" id="GO:0005737">
    <property type="term" value="C:cytoplasm"/>
    <property type="evidence" value="ECO:0007669"/>
    <property type="project" value="UniProtKB-SubCell"/>
</dbReference>
<dbReference type="GO" id="GO:0005886">
    <property type="term" value="C:plasma membrane"/>
    <property type="evidence" value="ECO:0007669"/>
    <property type="project" value="TreeGrafter"/>
</dbReference>
<dbReference type="GO" id="GO:0005524">
    <property type="term" value="F:ATP binding"/>
    <property type="evidence" value="ECO:0007669"/>
    <property type="project" value="UniProtKB-UniRule"/>
</dbReference>
<dbReference type="GO" id="GO:0001727">
    <property type="term" value="F:lipid kinase activity"/>
    <property type="evidence" value="ECO:0007669"/>
    <property type="project" value="UniProtKB-UniRule"/>
</dbReference>
<dbReference type="GO" id="GO:0000287">
    <property type="term" value="F:magnesium ion binding"/>
    <property type="evidence" value="ECO:0007669"/>
    <property type="project" value="UniProtKB-UniRule"/>
</dbReference>
<dbReference type="GO" id="GO:0008654">
    <property type="term" value="P:phospholipid biosynthetic process"/>
    <property type="evidence" value="ECO:0007669"/>
    <property type="project" value="UniProtKB-UniRule"/>
</dbReference>
<dbReference type="FunFam" id="2.60.200.40:FF:000008">
    <property type="entry name" value="Probable lipid kinase YegS"/>
    <property type="match status" value="1"/>
</dbReference>
<dbReference type="FunFam" id="3.40.50.10330:FF:000008">
    <property type="entry name" value="Probable lipid kinase YegS"/>
    <property type="match status" value="1"/>
</dbReference>
<dbReference type="Gene3D" id="2.60.200.40">
    <property type="match status" value="1"/>
</dbReference>
<dbReference type="Gene3D" id="3.40.50.10330">
    <property type="entry name" value="Probable inorganic polyphosphate/atp-NAD kinase, domain 1"/>
    <property type="match status" value="1"/>
</dbReference>
<dbReference type="HAMAP" id="MF_01377">
    <property type="entry name" value="YegS"/>
    <property type="match status" value="1"/>
</dbReference>
<dbReference type="InterPro" id="IPR017438">
    <property type="entry name" value="ATP-NAD_kinase_N"/>
</dbReference>
<dbReference type="InterPro" id="IPR005218">
    <property type="entry name" value="Diacylglycerol/lipid_kinase"/>
</dbReference>
<dbReference type="InterPro" id="IPR001206">
    <property type="entry name" value="Diacylglycerol_kinase_cat_dom"/>
</dbReference>
<dbReference type="InterPro" id="IPR022433">
    <property type="entry name" value="Lip_kinase_YegS"/>
</dbReference>
<dbReference type="InterPro" id="IPR050187">
    <property type="entry name" value="Lipid_Phosphate_FormReg"/>
</dbReference>
<dbReference type="InterPro" id="IPR016064">
    <property type="entry name" value="NAD/diacylglycerol_kinase_sf"/>
</dbReference>
<dbReference type="InterPro" id="IPR045540">
    <property type="entry name" value="YegS/DAGK_C"/>
</dbReference>
<dbReference type="NCBIfam" id="TIGR03702">
    <property type="entry name" value="lip_kinase_YegS"/>
    <property type="match status" value="1"/>
</dbReference>
<dbReference type="NCBIfam" id="NF009602">
    <property type="entry name" value="PRK13054.1"/>
    <property type="match status" value="1"/>
</dbReference>
<dbReference type="NCBIfam" id="TIGR00147">
    <property type="entry name" value="YegS/Rv2252/BmrU family lipid kinase"/>
    <property type="match status" value="1"/>
</dbReference>
<dbReference type="PANTHER" id="PTHR12358:SF106">
    <property type="entry name" value="LIPID KINASE YEGS"/>
    <property type="match status" value="1"/>
</dbReference>
<dbReference type="PANTHER" id="PTHR12358">
    <property type="entry name" value="SPHINGOSINE KINASE"/>
    <property type="match status" value="1"/>
</dbReference>
<dbReference type="Pfam" id="PF00781">
    <property type="entry name" value="DAGK_cat"/>
    <property type="match status" value="1"/>
</dbReference>
<dbReference type="Pfam" id="PF19279">
    <property type="entry name" value="YegS_C"/>
    <property type="match status" value="1"/>
</dbReference>
<dbReference type="SMART" id="SM00046">
    <property type="entry name" value="DAGKc"/>
    <property type="match status" value="1"/>
</dbReference>
<dbReference type="SUPFAM" id="SSF111331">
    <property type="entry name" value="NAD kinase/diacylglycerol kinase-like"/>
    <property type="match status" value="1"/>
</dbReference>
<dbReference type="PROSITE" id="PS50146">
    <property type="entry name" value="DAGK"/>
    <property type="match status" value="1"/>
</dbReference>
<sequence length="299" mass="32018">MAEFPASLLILNGKSTDNLPLREAIMLLREEGMTIHVRVTWEKGDAARYVEEARKLGVATVIAGGGDGTINEVSTALIQCEGDDIPALGILPLGTANDFATSVGIPEALDKALKLAIAGNAIAIDMAQVNKQTCFINMATGGFGTRITTETPEKLKAALGGVSYIIHGLMRMDTLQPDRCEIRGENFHWQGDALVIGIGNGRQAGGGQQLCPNALINDGLLQLRIFTGDEIIPTLVSTLKSDEDNPNIIEGASSWFDIQAPHEITFNLDGEPLSGQNFHIEILPAALRCRLPPDCPLLR</sequence>
<keyword id="KW-0067">ATP-binding</keyword>
<keyword id="KW-0963">Cytoplasm</keyword>
<keyword id="KW-0418">Kinase</keyword>
<keyword id="KW-0444">Lipid biosynthesis</keyword>
<keyword id="KW-0443">Lipid metabolism</keyword>
<keyword id="KW-0460">Magnesium</keyword>
<keyword id="KW-0479">Metal-binding</keyword>
<keyword id="KW-0547">Nucleotide-binding</keyword>
<keyword id="KW-0594">Phospholipid biosynthesis</keyword>
<keyword id="KW-1208">Phospholipid metabolism</keyword>
<keyword id="KW-1185">Reference proteome</keyword>
<keyword id="KW-0808">Transferase</keyword>